<organism>
    <name type="scientific">Rickettsia bellii (strain OSU 85-389)</name>
    <dbReference type="NCBI Taxonomy" id="391896"/>
    <lineage>
        <taxon>Bacteria</taxon>
        <taxon>Pseudomonadati</taxon>
        <taxon>Pseudomonadota</taxon>
        <taxon>Alphaproteobacteria</taxon>
        <taxon>Rickettsiales</taxon>
        <taxon>Rickettsiaceae</taxon>
        <taxon>Rickettsieae</taxon>
        <taxon>Rickettsia</taxon>
        <taxon>belli group</taxon>
    </lineage>
</organism>
<dbReference type="EMBL" id="CP000849">
    <property type="protein sequence ID" value="ABV79839.1"/>
    <property type="molecule type" value="Genomic_DNA"/>
</dbReference>
<dbReference type="RefSeq" id="WP_012152291.1">
    <property type="nucleotide sequence ID" value="NC_009883.1"/>
</dbReference>
<dbReference type="SMR" id="A8GY89"/>
<dbReference type="KEGG" id="rbo:A1I_07705"/>
<dbReference type="HOGENOM" id="CLU_004131_4_2_5"/>
<dbReference type="GO" id="GO:0032300">
    <property type="term" value="C:mismatch repair complex"/>
    <property type="evidence" value="ECO:0007669"/>
    <property type="project" value="InterPro"/>
</dbReference>
<dbReference type="GO" id="GO:0005524">
    <property type="term" value="F:ATP binding"/>
    <property type="evidence" value="ECO:0007669"/>
    <property type="project" value="InterPro"/>
</dbReference>
<dbReference type="GO" id="GO:0016887">
    <property type="term" value="F:ATP hydrolysis activity"/>
    <property type="evidence" value="ECO:0007669"/>
    <property type="project" value="InterPro"/>
</dbReference>
<dbReference type="GO" id="GO:0140664">
    <property type="term" value="F:ATP-dependent DNA damage sensor activity"/>
    <property type="evidence" value="ECO:0007669"/>
    <property type="project" value="InterPro"/>
</dbReference>
<dbReference type="GO" id="GO:0030983">
    <property type="term" value="F:mismatched DNA binding"/>
    <property type="evidence" value="ECO:0007669"/>
    <property type="project" value="InterPro"/>
</dbReference>
<dbReference type="GO" id="GO:0006298">
    <property type="term" value="P:mismatch repair"/>
    <property type="evidence" value="ECO:0007669"/>
    <property type="project" value="UniProtKB-UniRule"/>
</dbReference>
<dbReference type="CDD" id="cd16926">
    <property type="entry name" value="HATPase_MutL-MLH-PMS-like"/>
    <property type="match status" value="1"/>
</dbReference>
<dbReference type="CDD" id="cd00782">
    <property type="entry name" value="MutL_Trans"/>
    <property type="match status" value="1"/>
</dbReference>
<dbReference type="FunFam" id="3.30.565.10:FF:000003">
    <property type="entry name" value="DNA mismatch repair endonuclease MutL"/>
    <property type="match status" value="1"/>
</dbReference>
<dbReference type="Gene3D" id="3.30.230.10">
    <property type="match status" value="1"/>
</dbReference>
<dbReference type="Gene3D" id="3.30.565.10">
    <property type="entry name" value="Histidine kinase-like ATPase, C-terminal domain"/>
    <property type="match status" value="1"/>
</dbReference>
<dbReference type="Gene3D" id="3.30.1540.20">
    <property type="entry name" value="MutL, C-terminal domain, dimerisation subdomain"/>
    <property type="match status" value="1"/>
</dbReference>
<dbReference type="Gene3D" id="3.30.1370.100">
    <property type="entry name" value="MutL, C-terminal domain, regulatory subdomain"/>
    <property type="match status" value="1"/>
</dbReference>
<dbReference type="HAMAP" id="MF_00149">
    <property type="entry name" value="DNA_mis_repair"/>
    <property type="match status" value="1"/>
</dbReference>
<dbReference type="InterPro" id="IPR014762">
    <property type="entry name" value="DNA_mismatch_repair_CS"/>
</dbReference>
<dbReference type="InterPro" id="IPR020667">
    <property type="entry name" value="DNA_mismatch_repair_MutL"/>
</dbReference>
<dbReference type="InterPro" id="IPR013507">
    <property type="entry name" value="DNA_mismatch_S5_2-like"/>
</dbReference>
<dbReference type="InterPro" id="IPR036890">
    <property type="entry name" value="HATPase_C_sf"/>
</dbReference>
<dbReference type="InterPro" id="IPR002099">
    <property type="entry name" value="MutL/Mlh/PMS"/>
</dbReference>
<dbReference type="InterPro" id="IPR038973">
    <property type="entry name" value="MutL/Mlh/Pms-like"/>
</dbReference>
<dbReference type="InterPro" id="IPR014790">
    <property type="entry name" value="MutL_C"/>
</dbReference>
<dbReference type="InterPro" id="IPR042120">
    <property type="entry name" value="MutL_C_dimsub"/>
</dbReference>
<dbReference type="InterPro" id="IPR042121">
    <property type="entry name" value="MutL_C_regsub"/>
</dbReference>
<dbReference type="InterPro" id="IPR037198">
    <property type="entry name" value="MutL_C_sf"/>
</dbReference>
<dbReference type="InterPro" id="IPR020568">
    <property type="entry name" value="Ribosomal_Su5_D2-typ_SF"/>
</dbReference>
<dbReference type="InterPro" id="IPR014721">
    <property type="entry name" value="Ribsml_uS5_D2-typ_fold_subgr"/>
</dbReference>
<dbReference type="NCBIfam" id="TIGR00585">
    <property type="entry name" value="mutl"/>
    <property type="match status" value="1"/>
</dbReference>
<dbReference type="NCBIfam" id="NF000952">
    <property type="entry name" value="PRK00095.2-2"/>
    <property type="match status" value="1"/>
</dbReference>
<dbReference type="NCBIfam" id="NF000953">
    <property type="entry name" value="PRK00095.2-4"/>
    <property type="match status" value="1"/>
</dbReference>
<dbReference type="PANTHER" id="PTHR10073">
    <property type="entry name" value="DNA MISMATCH REPAIR PROTEIN MLH, PMS, MUTL"/>
    <property type="match status" value="1"/>
</dbReference>
<dbReference type="PANTHER" id="PTHR10073:SF12">
    <property type="entry name" value="DNA MISMATCH REPAIR PROTEIN MLH1"/>
    <property type="match status" value="1"/>
</dbReference>
<dbReference type="Pfam" id="PF01119">
    <property type="entry name" value="DNA_mis_repair"/>
    <property type="match status" value="1"/>
</dbReference>
<dbReference type="Pfam" id="PF13589">
    <property type="entry name" value="HATPase_c_3"/>
    <property type="match status" value="1"/>
</dbReference>
<dbReference type="Pfam" id="PF08676">
    <property type="entry name" value="MutL_C"/>
    <property type="match status" value="1"/>
</dbReference>
<dbReference type="SMART" id="SM01340">
    <property type="entry name" value="DNA_mis_repair"/>
    <property type="match status" value="1"/>
</dbReference>
<dbReference type="SMART" id="SM00853">
    <property type="entry name" value="MutL_C"/>
    <property type="match status" value="1"/>
</dbReference>
<dbReference type="SUPFAM" id="SSF55874">
    <property type="entry name" value="ATPase domain of HSP90 chaperone/DNA topoisomerase II/histidine kinase"/>
    <property type="match status" value="1"/>
</dbReference>
<dbReference type="SUPFAM" id="SSF118116">
    <property type="entry name" value="DNA mismatch repair protein MutL"/>
    <property type="match status" value="1"/>
</dbReference>
<dbReference type="SUPFAM" id="SSF54211">
    <property type="entry name" value="Ribosomal protein S5 domain 2-like"/>
    <property type="match status" value="1"/>
</dbReference>
<dbReference type="PROSITE" id="PS00058">
    <property type="entry name" value="DNA_MISMATCH_REPAIR_1"/>
    <property type="match status" value="1"/>
</dbReference>
<keyword id="KW-0227">DNA damage</keyword>
<keyword id="KW-0234">DNA repair</keyword>
<gene>
    <name evidence="1" type="primary">mutL</name>
    <name type="ordered locus">A1I_07705</name>
</gene>
<comment type="function">
    <text evidence="1">This protein is involved in the repair of mismatches in DNA. It is required for dam-dependent methyl-directed DNA mismatch repair. May act as a 'molecular matchmaker', a protein that promotes the formation of a stable complex between two or more DNA-binding proteins in an ATP-dependent manner without itself being part of a final effector complex.</text>
</comment>
<comment type="similarity">
    <text evidence="1">Belongs to the DNA mismatch repair MutL/HexB family.</text>
</comment>
<name>MUTL_RICB8</name>
<protein>
    <recommendedName>
        <fullName evidence="1">DNA mismatch repair protein MutL</fullName>
    </recommendedName>
</protein>
<feature type="chain" id="PRO_1000010069" description="DNA mismatch repair protein MutL">
    <location>
        <begin position="1"/>
        <end position="611"/>
    </location>
</feature>
<feature type="region of interest" description="Disordered" evidence="2">
    <location>
        <begin position="364"/>
        <end position="384"/>
    </location>
</feature>
<reference key="1">
    <citation type="submission" date="2007-09" db="EMBL/GenBank/DDBJ databases">
        <title>Complete genome sequencing of Rickettsia bellii.</title>
        <authorList>
            <person name="Madan A."/>
            <person name="Lee H."/>
            <person name="Madan A."/>
            <person name="Yoon J.-G."/>
            <person name="Ryu G.-Y."/>
            <person name="Dasch G."/>
            <person name="Ereemeva M."/>
        </authorList>
    </citation>
    <scope>NUCLEOTIDE SEQUENCE [LARGE SCALE GENOMIC DNA]</scope>
    <source>
        <strain>OSU 85-389</strain>
    </source>
</reference>
<sequence>MTIKLLSESTINRIAAGEVIERPASVVKELVENAVDAGSTKIDIILERAGKNLIIISDDGVGMTDKELEIAVERHTTSKLDETDFLNIHTFGFRGEALPSIAAISKMLITSKKRDNQKAFQIKLIGGDEKQIAPAIHNEGTKIEIRDLFFATPARLKFLRTDKTELAATVDVVKKIALAHPEISFSLTHDGKTLLKLKGQNKDAENNLKQRIIDVIGEDFIKNASYIDFKSPDFSIYGYTSIPTYNRASSEDQFLFINNRPVKDKLLQVALRVAYQDYMLRDRYPLCAIFLQIDPQLVDVNVHPAKAEVRFHDPNYVRNLLIDSIKNALSNKSHIASTTIASSAIELFKNPFVNKEPAISKPLNVNSKPSKYRPATSPTVPKYTPNNSCQKLIDTLPHARIEQEVEQRIQNEPQKSSQYRLGAAKAQLHTTYVISQTEDSIVITDQHAAHERLGYEKIKNYIKNEELIKQRLLIPEIVELPDEKRADILYENKDKLSKLGLSLEKFGEKSIIVTEIPNILGDINVQKLIQDLADHLAECGENIALTELIEHVTETYACHYSIRAGRKLSADEMNALLRQMENTPFSGQCNHGRPTYIELKLKDIERLFGRK</sequence>
<accession>A8GY89</accession>
<proteinExistence type="inferred from homology"/>
<evidence type="ECO:0000255" key="1">
    <source>
        <dbReference type="HAMAP-Rule" id="MF_00149"/>
    </source>
</evidence>
<evidence type="ECO:0000256" key="2">
    <source>
        <dbReference type="SAM" id="MobiDB-lite"/>
    </source>
</evidence>